<organism>
    <name type="scientific">Staphylococcus aureus (strain NCTC 8325 / PS 47)</name>
    <dbReference type="NCBI Taxonomy" id="93061"/>
    <lineage>
        <taxon>Bacteria</taxon>
        <taxon>Bacillati</taxon>
        <taxon>Bacillota</taxon>
        <taxon>Bacilli</taxon>
        <taxon>Bacillales</taxon>
        <taxon>Staphylococcaceae</taxon>
        <taxon>Staphylococcus</taxon>
    </lineage>
</organism>
<sequence>MVQCLVVDDDPRILNYIASHLQTEHIDAYTQPSGEAALKLLEKQRVDIAVVDIMMDGMDGFQLCNTLKNDYDIPVIMLTARDALSDKERAFISGTDDYVTKPFEVKELIFRIRAVLRRYNINSNSEMTIGNLTLNQSYLELQVSNKTMTLPNKEFQLLFMLAARPKQIFTREQIIEKIWGYDYEGDERTVDVHIKRLRQRLKKLNATLTIETVRGQGYKVENHV</sequence>
<gene>
    <name type="primary">hssR</name>
    <name type="ordered locus">SAOUHSC_02643</name>
</gene>
<evidence type="ECO:0000250" key="1"/>
<evidence type="ECO:0000255" key="2">
    <source>
        <dbReference type="PROSITE-ProRule" id="PRU00169"/>
    </source>
</evidence>
<evidence type="ECO:0000255" key="3">
    <source>
        <dbReference type="PROSITE-ProRule" id="PRU01091"/>
    </source>
</evidence>
<evidence type="ECO:0000305" key="4"/>
<feature type="chain" id="PRO_0000331329" description="Heme response regulator HssR">
    <location>
        <begin position="1"/>
        <end position="224"/>
    </location>
</feature>
<feature type="domain" description="Response regulatory" evidence="2">
    <location>
        <begin position="3"/>
        <end position="116"/>
    </location>
</feature>
<feature type="DNA-binding region" description="OmpR/PhoB-type" evidence="3">
    <location>
        <begin position="124"/>
        <end position="222"/>
    </location>
</feature>
<feature type="modified residue" description="4-aspartylphosphate" evidence="2">
    <location>
        <position position="52"/>
    </location>
</feature>
<proteinExistence type="inferred from homology"/>
<dbReference type="EMBL" id="CP000253">
    <property type="protein sequence ID" value="ABD31651.1"/>
    <property type="molecule type" value="Genomic_DNA"/>
</dbReference>
<dbReference type="RefSeq" id="WP_000249497.1">
    <property type="nucleotide sequence ID" value="NZ_LS483365.1"/>
</dbReference>
<dbReference type="RefSeq" id="YP_501105.1">
    <property type="nucleotide sequence ID" value="NC_007795.1"/>
</dbReference>
<dbReference type="SMR" id="Q2FVQ9"/>
<dbReference type="STRING" id="93061.SAOUHSC_02643"/>
<dbReference type="PaxDb" id="1280-SAXN108_2613"/>
<dbReference type="GeneID" id="3921205"/>
<dbReference type="KEGG" id="sao:SAOUHSC_02643"/>
<dbReference type="PATRIC" id="fig|93061.5.peg.2390"/>
<dbReference type="eggNOG" id="COG0745">
    <property type="taxonomic scope" value="Bacteria"/>
</dbReference>
<dbReference type="HOGENOM" id="CLU_000445_30_3_9"/>
<dbReference type="OrthoDB" id="9790442at2"/>
<dbReference type="PRO" id="PR:Q2FVQ9"/>
<dbReference type="Proteomes" id="UP000008816">
    <property type="component" value="Chromosome"/>
</dbReference>
<dbReference type="GO" id="GO:0005829">
    <property type="term" value="C:cytosol"/>
    <property type="evidence" value="ECO:0000318"/>
    <property type="project" value="GO_Central"/>
</dbReference>
<dbReference type="GO" id="GO:0032993">
    <property type="term" value="C:protein-DNA complex"/>
    <property type="evidence" value="ECO:0000318"/>
    <property type="project" value="GO_Central"/>
</dbReference>
<dbReference type="GO" id="GO:0000156">
    <property type="term" value="F:phosphorelay response regulator activity"/>
    <property type="evidence" value="ECO:0000318"/>
    <property type="project" value="GO_Central"/>
</dbReference>
<dbReference type="GO" id="GO:0000976">
    <property type="term" value="F:transcription cis-regulatory region binding"/>
    <property type="evidence" value="ECO:0000318"/>
    <property type="project" value="GO_Central"/>
</dbReference>
<dbReference type="GO" id="GO:0006355">
    <property type="term" value="P:regulation of DNA-templated transcription"/>
    <property type="evidence" value="ECO:0000318"/>
    <property type="project" value="GO_Central"/>
</dbReference>
<dbReference type="CDD" id="cd17574">
    <property type="entry name" value="REC_OmpR"/>
    <property type="match status" value="1"/>
</dbReference>
<dbReference type="CDD" id="cd00383">
    <property type="entry name" value="trans_reg_C"/>
    <property type="match status" value="1"/>
</dbReference>
<dbReference type="FunFam" id="1.10.10.10:FF:000018">
    <property type="entry name" value="DNA-binding response regulator ResD"/>
    <property type="match status" value="1"/>
</dbReference>
<dbReference type="Gene3D" id="3.40.50.2300">
    <property type="match status" value="1"/>
</dbReference>
<dbReference type="Gene3D" id="6.10.250.690">
    <property type="match status" value="1"/>
</dbReference>
<dbReference type="Gene3D" id="1.10.10.10">
    <property type="entry name" value="Winged helix-like DNA-binding domain superfamily/Winged helix DNA-binding domain"/>
    <property type="match status" value="1"/>
</dbReference>
<dbReference type="InterPro" id="IPR011006">
    <property type="entry name" value="CheY-like_superfamily"/>
</dbReference>
<dbReference type="InterPro" id="IPR001867">
    <property type="entry name" value="OmpR/PhoB-type_DNA-bd"/>
</dbReference>
<dbReference type="InterPro" id="IPR001789">
    <property type="entry name" value="Sig_transdc_resp-reg_receiver"/>
</dbReference>
<dbReference type="InterPro" id="IPR039420">
    <property type="entry name" value="WalR-like"/>
</dbReference>
<dbReference type="InterPro" id="IPR036388">
    <property type="entry name" value="WH-like_DNA-bd_sf"/>
</dbReference>
<dbReference type="PANTHER" id="PTHR48111:SF49">
    <property type="entry name" value="HEME RESPONSE REGULATOR HSSR"/>
    <property type="match status" value="1"/>
</dbReference>
<dbReference type="PANTHER" id="PTHR48111">
    <property type="entry name" value="REGULATOR OF RPOS"/>
    <property type="match status" value="1"/>
</dbReference>
<dbReference type="Pfam" id="PF00072">
    <property type="entry name" value="Response_reg"/>
    <property type="match status" value="1"/>
</dbReference>
<dbReference type="Pfam" id="PF00486">
    <property type="entry name" value="Trans_reg_C"/>
    <property type="match status" value="1"/>
</dbReference>
<dbReference type="SMART" id="SM00448">
    <property type="entry name" value="REC"/>
    <property type="match status" value="1"/>
</dbReference>
<dbReference type="SMART" id="SM00862">
    <property type="entry name" value="Trans_reg_C"/>
    <property type="match status" value="1"/>
</dbReference>
<dbReference type="SUPFAM" id="SSF52172">
    <property type="entry name" value="CheY-like"/>
    <property type="match status" value="1"/>
</dbReference>
<dbReference type="PROSITE" id="PS51755">
    <property type="entry name" value="OMPR_PHOB"/>
    <property type="match status" value="1"/>
</dbReference>
<dbReference type="PROSITE" id="PS50110">
    <property type="entry name" value="RESPONSE_REGULATORY"/>
    <property type="match status" value="1"/>
</dbReference>
<comment type="function">
    <text evidence="1">Member of the two-component regulatory system HssS/HssR involved in intracellular heme homeostasis and tempering of staphylococcal virulence. Phosphorylated HssR binds to a direct repeat sequence within hrtAB promoter and activates the expression of hrtAB, an efflux pump, in response to extracellular heme, hemin, hemoglobin or blood (By similarity).</text>
</comment>
<comment type="subcellular location">
    <subcellularLocation>
        <location evidence="4">Cytoplasm</location>
    </subcellularLocation>
</comment>
<comment type="PTM">
    <text evidence="1">Phosphorylated by HssS.</text>
</comment>
<name>HSSR_STAA8</name>
<keyword id="KW-0010">Activator</keyword>
<keyword id="KW-0963">Cytoplasm</keyword>
<keyword id="KW-0238">DNA-binding</keyword>
<keyword id="KW-0597">Phosphoprotein</keyword>
<keyword id="KW-1185">Reference proteome</keyword>
<keyword id="KW-0804">Transcription</keyword>
<keyword id="KW-0805">Transcription regulation</keyword>
<keyword id="KW-0902">Two-component regulatory system</keyword>
<keyword id="KW-0843">Virulence</keyword>
<reference key="1">
    <citation type="book" date="2006" name="Gram positive pathogens, 2nd edition">
        <title>The Staphylococcus aureus NCTC 8325 genome.</title>
        <editorList>
            <person name="Fischetti V."/>
            <person name="Novick R."/>
            <person name="Ferretti J."/>
            <person name="Portnoy D."/>
            <person name="Rood J."/>
        </editorList>
        <authorList>
            <person name="Gillaspy A.F."/>
            <person name="Worrell V."/>
            <person name="Orvis J."/>
            <person name="Roe B.A."/>
            <person name="Dyer D.W."/>
            <person name="Iandolo J.J."/>
        </authorList>
    </citation>
    <scope>NUCLEOTIDE SEQUENCE [LARGE SCALE GENOMIC DNA]</scope>
    <source>
        <strain>NCTC 8325 / PS 47</strain>
    </source>
</reference>
<protein>
    <recommendedName>
        <fullName>Heme response regulator HssR</fullName>
    </recommendedName>
</protein>
<accession>Q2FVQ9</accession>